<gene>
    <name evidence="1" type="primary">nfuA</name>
    <name type="ordered locus">Rmag_0417</name>
</gene>
<evidence type="ECO:0000255" key="1">
    <source>
        <dbReference type="HAMAP-Rule" id="MF_01637"/>
    </source>
</evidence>
<feature type="chain" id="PRO_1000186769" description="Fe/S biogenesis protein NfuA">
    <location>
        <begin position="1"/>
        <end position="192"/>
    </location>
</feature>
<feature type="binding site" evidence="1">
    <location>
        <position position="150"/>
    </location>
    <ligand>
        <name>[4Fe-4S] cluster</name>
        <dbReference type="ChEBI" id="CHEBI:49883"/>
    </ligand>
</feature>
<feature type="binding site" evidence="1">
    <location>
        <position position="153"/>
    </location>
    <ligand>
        <name>[4Fe-4S] cluster</name>
        <dbReference type="ChEBI" id="CHEBI:49883"/>
    </ligand>
</feature>
<sequence length="192" mass="21209">MFDITDEAKVYVADLFAQQDEKDLGLKVDVEKAGTPAAVVTFNFCFPKELSKTYKKFEYEGFYAYIDELNFEYLKDSEVALKDAGTGKKLTITAPNTKGKEPKEDAPLEEKIKYVIAANINPGLASHGGFVELVEITKHMDVILNFGGGCQGCSSVKSTLEQGVEAQLKMSFPEIKSVRDVTDHSNTDNAYI</sequence>
<accession>A1AW72</accession>
<reference key="1">
    <citation type="journal article" date="2007" name="Science">
        <title>The Calyptogena magnifica chemoautotrophic symbiont genome.</title>
        <authorList>
            <person name="Newton I.L.G."/>
            <person name="Woyke T."/>
            <person name="Auchtung T.A."/>
            <person name="Dilly G.F."/>
            <person name="Dutton R.J."/>
            <person name="Fisher M.C."/>
            <person name="Fontanez K.M."/>
            <person name="Lau E."/>
            <person name="Stewart F.J."/>
            <person name="Richardson P.M."/>
            <person name="Barry K.W."/>
            <person name="Saunders E."/>
            <person name="Detter J.C."/>
            <person name="Wu D."/>
            <person name="Eisen J.A."/>
            <person name="Cavanaugh C.M."/>
        </authorList>
    </citation>
    <scope>NUCLEOTIDE SEQUENCE [LARGE SCALE GENOMIC DNA]</scope>
</reference>
<comment type="function">
    <text evidence="1">Involved in iron-sulfur cluster biogenesis. Binds a 4Fe-4S cluster, can transfer this cluster to apoproteins, and thereby intervenes in the maturation of Fe/S proteins. Could also act as a scaffold/chaperone for damaged Fe/S proteins.</text>
</comment>
<comment type="cofactor">
    <cofactor evidence="1">
        <name>[4Fe-4S] cluster</name>
        <dbReference type="ChEBI" id="CHEBI:49883"/>
    </cofactor>
    <text evidence="1">Binds 1 [4Fe-4S] cluster per subunit. The cluster is presumably bound at the interface of two monomers.</text>
</comment>
<comment type="subunit">
    <text evidence="1">Homodimer.</text>
</comment>
<comment type="similarity">
    <text evidence="1">Belongs to the NfuA family.</text>
</comment>
<name>NFUA_RUTMC</name>
<protein>
    <recommendedName>
        <fullName evidence="1">Fe/S biogenesis protein NfuA</fullName>
    </recommendedName>
</protein>
<proteinExistence type="inferred from homology"/>
<dbReference type="EMBL" id="CP000488">
    <property type="protein sequence ID" value="ABL02179.1"/>
    <property type="molecule type" value="Genomic_DNA"/>
</dbReference>
<dbReference type="RefSeq" id="WP_011737804.1">
    <property type="nucleotide sequence ID" value="NC_008610.1"/>
</dbReference>
<dbReference type="SMR" id="A1AW72"/>
<dbReference type="STRING" id="413404.Rmag_0417"/>
<dbReference type="KEGG" id="rma:Rmag_0417"/>
<dbReference type="eggNOG" id="COG0316">
    <property type="taxonomic scope" value="Bacteria"/>
</dbReference>
<dbReference type="eggNOG" id="COG0694">
    <property type="taxonomic scope" value="Bacteria"/>
</dbReference>
<dbReference type="HOGENOM" id="CLU_094569_0_0_6"/>
<dbReference type="OrthoDB" id="9785450at2"/>
<dbReference type="Proteomes" id="UP000002587">
    <property type="component" value="Chromosome"/>
</dbReference>
<dbReference type="GO" id="GO:0051539">
    <property type="term" value="F:4 iron, 4 sulfur cluster binding"/>
    <property type="evidence" value="ECO:0007669"/>
    <property type="project" value="UniProtKB-UniRule"/>
</dbReference>
<dbReference type="GO" id="GO:0005506">
    <property type="term" value="F:iron ion binding"/>
    <property type="evidence" value="ECO:0007669"/>
    <property type="project" value="InterPro"/>
</dbReference>
<dbReference type="GO" id="GO:0016226">
    <property type="term" value="P:iron-sulfur cluster assembly"/>
    <property type="evidence" value="ECO:0007669"/>
    <property type="project" value="UniProtKB-UniRule"/>
</dbReference>
<dbReference type="GO" id="GO:0051604">
    <property type="term" value="P:protein maturation"/>
    <property type="evidence" value="ECO:0007669"/>
    <property type="project" value="UniProtKB-UniRule"/>
</dbReference>
<dbReference type="Gene3D" id="3.30.300.130">
    <property type="entry name" value="Fe-S cluster assembly (FSCA)"/>
    <property type="match status" value="1"/>
</dbReference>
<dbReference type="Gene3D" id="2.60.300.12">
    <property type="entry name" value="HesB-like domain"/>
    <property type="match status" value="1"/>
</dbReference>
<dbReference type="HAMAP" id="MF_01637">
    <property type="entry name" value="Fe_S_biogen_NfuA"/>
    <property type="match status" value="1"/>
</dbReference>
<dbReference type="InterPro" id="IPR017726">
    <property type="entry name" value="Fe/S_biogenesis_protein_NfuA"/>
</dbReference>
<dbReference type="InterPro" id="IPR034904">
    <property type="entry name" value="FSCA_dom_sf"/>
</dbReference>
<dbReference type="InterPro" id="IPR035903">
    <property type="entry name" value="HesB-like_dom_sf"/>
</dbReference>
<dbReference type="InterPro" id="IPR001075">
    <property type="entry name" value="NIF_FeS_clus_asmbl_NifU_C"/>
</dbReference>
<dbReference type="PANTHER" id="PTHR11178:SF51">
    <property type="entry name" value="FE_S BIOGENESIS PROTEIN NFUA"/>
    <property type="match status" value="1"/>
</dbReference>
<dbReference type="PANTHER" id="PTHR11178">
    <property type="entry name" value="IRON-SULFUR CLUSTER SCAFFOLD PROTEIN NFU-RELATED"/>
    <property type="match status" value="1"/>
</dbReference>
<dbReference type="Pfam" id="PF01106">
    <property type="entry name" value="NifU"/>
    <property type="match status" value="1"/>
</dbReference>
<dbReference type="SUPFAM" id="SSF117916">
    <property type="entry name" value="Fe-S cluster assembly (FSCA) domain-like"/>
    <property type="match status" value="1"/>
</dbReference>
<dbReference type="SUPFAM" id="SSF89360">
    <property type="entry name" value="HesB-like domain"/>
    <property type="match status" value="1"/>
</dbReference>
<keyword id="KW-0004">4Fe-4S</keyword>
<keyword id="KW-0408">Iron</keyword>
<keyword id="KW-0411">Iron-sulfur</keyword>
<keyword id="KW-0479">Metal-binding</keyword>
<organism>
    <name type="scientific">Ruthia magnifica subsp. Calyptogena magnifica</name>
    <dbReference type="NCBI Taxonomy" id="413404"/>
    <lineage>
        <taxon>Bacteria</taxon>
        <taxon>Pseudomonadati</taxon>
        <taxon>Pseudomonadota</taxon>
        <taxon>Gammaproteobacteria</taxon>
        <taxon>Candidatus Pseudothioglobaceae</taxon>
        <taxon>Candidatus Ruthturnera</taxon>
    </lineage>
</organism>